<organism>
    <name type="scientific">Paracoccidioides lutzii (strain ATCC MYA-826 / Pb01)</name>
    <name type="common">Paracoccidioides brasiliensis</name>
    <dbReference type="NCBI Taxonomy" id="502779"/>
    <lineage>
        <taxon>Eukaryota</taxon>
        <taxon>Fungi</taxon>
        <taxon>Dikarya</taxon>
        <taxon>Ascomycota</taxon>
        <taxon>Pezizomycotina</taxon>
        <taxon>Eurotiomycetes</taxon>
        <taxon>Eurotiomycetidae</taxon>
        <taxon>Onygenales</taxon>
        <taxon>Ajellomycetaceae</taxon>
        <taxon>Paracoccidioides</taxon>
    </lineage>
</organism>
<name>SEC11_PARBA</name>
<accession>C1GU90</accession>
<dbReference type="EC" id="3.4.21.89" evidence="1"/>
<dbReference type="EMBL" id="KN293995">
    <property type="protein sequence ID" value="EEH39896.1"/>
    <property type="molecule type" value="Genomic_DNA"/>
</dbReference>
<dbReference type="RefSeq" id="XP_002796197.1">
    <property type="nucleotide sequence ID" value="XM_002796151.1"/>
</dbReference>
<dbReference type="SMR" id="C1GU90"/>
<dbReference type="STRING" id="502779.C1GU90"/>
<dbReference type="MEROPS" id="S26.010"/>
<dbReference type="GlyCosmos" id="C1GU90">
    <property type="glycosylation" value="1 site, No reported glycans"/>
</dbReference>
<dbReference type="GeneID" id="9099583"/>
<dbReference type="KEGG" id="pbl:PAAG_02085"/>
<dbReference type="VEuPathDB" id="FungiDB:PAAG_02085"/>
<dbReference type="eggNOG" id="KOG3342">
    <property type="taxonomic scope" value="Eukaryota"/>
</dbReference>
<dbReference type="HOGENOM" id="CLU_089996_0_0_1"/>
<dbReference type="OMA" id="ILMNEYP"/>
<dbReference type="OrthoDB" id="10257561at2759"/>
<dbReference type="Proteomes" id="UP000002059">
    <property type="component" value="Partially assembled WGS sequence"/>
</dbReference>
<dbReference type="GO" id="GO:0005787">
    <property type="term" value="C:signal peptidase complex"/>
    <property type="evidence" value="ECO:0007669"/>
    <property type="project" value="TreeGrafter"/>
</dbReference>
<dbReference type="GO" id="GO:0004252">
    <property type="term" value="F:serine-type endopeptidase activity"/>
    <property type="evidence" value="ECO:0007669"/>
    <property type="project" value="UniProtKB-EC"/>
</dbReference>
<dbReference type="GO" id="GO:0006465">
    <property type="term" value="P:signal peptide processing"/>
    <property type="evidence" value="ECO:0007669"/>
    <property type="project" value="InterPro"/>
</dbReference>
<dbReference type="CDD" id="cd06530">
    <property type="entry name" value="S26_SPase_I"/>
    <property type="match status" value="1"/>
</dbReference>
<dbReference type="InterPro" id="IPR036286">
    <property type="entry name" value="LexA/Signal_pep-like_sf"/>
</dbReference>
<dbReference type="InterPro" id="IPR019756">
    <property type="entry name" value="Pept_S26A_signal_pept_1_Ser-AS"/>
</dbReference>
<dbReference type="InterPro" id="IPR019533">
    <property type="entry name" value="Peptidase_S26"/>
</dbReference>
<dbReference type="InterPro" id="IPR001733">
    <property type="entry name" value="Peptidase_S26B"/>
</dbReference>
<dbReference type="NCBIfam" id="TIGR02228">
    <property type="entry name" value="sigpep_I_arch"/>
    <property type="match status" value="1"/>
</dbReference>
<dbReference type="PANTHER" id="PTHR10806">
    <property type="entry name" value="SIGNAL PEPTIDASE COMPLEX CATALYTIC SUBUNIT SEC11"/>
    <property type="match status" value="1"/>
</dbReference>
<dbReference type="PANTHER" id="PTHR10806:SF6">
    <property type="entry name" value="SIGNAL PEPTIDASE COMPLEX CATALYTIC SUBUNIT SEC11"/>
    <property type="match status" value="1"/>
</dbReference>
<dbReference type="PRINTS" id="PR00728">
    <property type="entry name" value="SIGNALPTASE"/>
</dbReference>
<dbReference type="SUPFAM" id="SSF51306">
    <property type="entry name" value="LexA/Signal peptidase"/>
    <property type="match status" value="1"/>
</dbReference>
<dbReference type="PROSITE" id="PS00501">
    <property type="entry name" value="SPASE_I_1"/>
    <property type="match status" value="1"/>
</dbReference>
<comment type="function">
    <text evidence="1 2">Catalytic component of the signal peptidase complex (SPC) which catalyzes the cleavage of N-terminal signal sequences from nascent proteins as they are translocated into the lumen of the endoplasmic reticulum (By similarity). Specifically cleaves N-terminal signal peptides that contain a hydrophobic alpha-helix (h-region) shorter than 18-20 amino acids (By similarity).</text>
</comment>
<comment type="catalytic activity">
    <reaction evidence="1">
        <text>Cleavage of hydrophobic, N-terminal signal or leader sequences from secreted and periplasmic proteins.</text>
        <dbReference type="EC" id="3.4.21.89"/>
    </reaction>
</comment>
<comment type="subunit">
    <text evidence="1 2">Component of the signal peptidase complex (SPC) composed of a catalytic subunit SEC11 and three accessory subunits SPC1, SPC2 and SPC3 (By similarity). The complex induces a local thinning of the ER membrane which is used to measure the length of the signal peptide (SP) h-region of protein substrates. This ensures the selectivity of the complex towards h-regions shorter than 18-20 amino acids (By similarity). SPC associates with the translocon complex (By similarity).</text>
</comment>
<comment type="subcellular location">
    <subcellularLocation>
        <location evidence="1">Endoplasmic reticulum membrane</location>
        <topology evidence="1">Single-pass type II membrane protein</topology>
    </subcellularLocation>
</comment>
<comment type="domain">
    <text evidence="2">The C-terminal short (CTS) helix is essential for catalytic activity. It may be accommodated as a transmembrane helix in the thinned membrane environment of the complex, similarly to the signal peptide in the complex substrates.</text>
</comment>
<comment type="similarity">
    <text evidence="5">Belongs to the peptidase S26B family.</text>
</comment>
<keyword id="KW-0256">Endoplasmic reticulum</keyword>
<keyword id="KW-0325">Glycoprotein</keyword>
<keyword id="KW-0378">Hydrolase</keyword>
<keyword id="KW-0472">Membrane</keyword>
<keyword id="KW-0645">Protease</keyword>
<keyword id="KW-1185">Reference proteome</keyword>
<keyword id="KW-0735">Signal-anchor</keyword>
<keyword id="KW-0812">Transmembrane</keyword>
<keyword id="KW-1133">Transmembrane helix</keyword>
<reference key="1">
    <citation type="journal article" date="2011" name="PLoS Genet.">
        <title>Comparative genomic analysis of human fungal pathogens causing paracoccidioidomycosis.</title>
        <authorList>
            <person name="Desjardins C.A."/>
            <person name="Champion M.D."/>
            <person name="Holder J.W."/>
            <person name="Muszewska A."/>
            <person name="Goldberg J."/>
            <person name="Bailao A.M."/>
            <person name="Brigido M.M."/>
            <person name="Ferreira M.E."/>
            <person name="Garcia A.M."/>
            <person name="Grynberg M."/>
            <person name="Gujja S."/>
            <person name="Heiman D.I."/>
            <person name="Henn M.R."/>
            <person name="Kodira C.D."/>
            <person name="Leon-Narvaez H."/>
            <person name="Longo L.V.G."/>
            <person name="Ma L.-J."/>
            <person name="Malavazi I."/>
            <person name="Matsuo A.L."/>
            <person name="Morais F.V."/>
            <person name="Pereira M."/>
            <person name="Rodriguez-Brito S."/>
            <person name="Sakthikumar S."/>
            <person name="Salem-Izacc S.M."/>
            <person name="Sykes S.M."/>
            <person name="Teixeira M.M."/>
            <person name="Vallejo M.C."/>
            <person name="Walter M.E."/>
            <person name="Yandava C."/>
            <person name="Young S."/>
            <person name="Zeng Q."/>
            <person name="Zucker J."/>
            <person name="Felipe M.S."/>
            <person name="Goldman G.H."/>
            <person name="Haas B.J."/>
            <person name="McEwen J.G."/>
            <person name="Nino-Vega G."/>
            <person name="Puccia R."/>
            <person name="San-Blas G."/>
            <person name="Soares C.M."/>
            <person name="Birren B.W."/>
            <person name="Cuomo C.A."/>
        </authorList>
    </citation>
    <scope>NUCLEOTIDE SEQUENCE [LARGE SCALE GENOMIC DNA]</scope>
    <source>
        <strain>ATCC MYA-826 / Pb01</strain>
    </source>
</reference>
<evidence type="ECO:0000250" key="1">
    <source>
        <dbReference type="UniProtKB" id="P15367"/>
    </source>
</evidence>
<evidence type="ECO:0000250" key="2">
    <source>
        <dbReference type="UniProtKB" id="P67812"/>
    </source>
</evidence>
<evidence type="ECO:0000255" key="3"/>
<evidence type="ECO:0000256" key="4">
    <source>
        <dbReference type="SAM" id="MobiDB-lite"/>
    </source>
</evidence>
<evidence type="ECO:0000305" key="5"/>
<sequence length="197" mass="21902">MLSSLAPYMANPRQTLTQVLNFALVLSTAFMLWKGLSVVTNSTSPIVVVLSGSMEPAFQRGDLLFLWNRSPRVDVGEIVVYNVRGKDIPIVHRVMRSFPELPGREDKKSVKKGGEEGEETSSTPSQKLLTKGDNNMADDTELYAQGQEYLDRKEDIVGSVRGYVPGVGYVTILLSEHPWLRSVLLGFMGLMVVLQRE</sequence>
<feature type="chain" id="PRO_0000412345" description="Signal peptidase complex catalytic subunit SEC11">
    <location>
        <begin position="1"/>
        <end position="197"/>
    </location>
</feature>
<feature type="topological domain" description="Cytoplasmic" evidence="3">
    <location>
        <begin position="1"/>
        <end position="14"/>
    </location>
</feature>
<feature type="transmembrane region" description="Helical; Signal-anchor for type II membrane protein" evidence="3">
    <location>
        <begin position="15"/>
        <end position="33"/>
    </location>
</feature>
<feature type="topological domain" description="Lumenal" evidence="3">
    <location>
        <begin position="34"/>
        <end position="197"/>
    </location>
</feature>
<feature type="region of interest" description="Disordered" evidence="4">
    <location>
        <begin position="102"/>
        <end position="134"/>
    </location>
</feature>
<feature type="region of interest" description="C-terminal short (CTS) helix" evidence="2">
    <location>
        <begin position="183"/>
        <end position="194"/>
    </location>
</feature>
<feature type="compositionally biased region" description="Basic and acidic residues" evidence="4">
    <location>
        <begin position="102"/>
        <end position="115"/>
    </location>
</feature>
<feature type="active site" description="Charge relay system" evidence="1">
    <location>
        <position position="53"/>
    </location>
</feature>
<feature type="active site" description="Charge relay system" evidence="1">
    <location>
        <position position="92"/>
    </location>
</feature>
<feature type="active site" description="Charge relay system" evidence="1">
    <location>
        <position position="139"/>
    </location>
</feature>
<feature type="glycosylation site" description="N-linked (GlcNAc...) asparagine" evidence="3">
    <location>
        <position position="41"/>
    </location>
</feature>
<proteinExistence type="inferred from homology"/>
<protein>
    <recommendedName>
        <fullName>Signal peptidase complex catalytic subunit SEC11</fullName>
        <ecNumber evidence="1">3.4.21.89</ecNumber>
    </recommendedName>
    <alternativeName>
        <fullName>Signal peptidase I</fullName>
    </alternativeName>
</protein>
<gene>
    <name type="primary">SEC11</name>
    <name type="ORF">PAAG_02085</name>
</gene>